<keyword id="KW-0028">Amino-acid biosynthesis</keyword>
<keyword id="KW-0055">Arginine biosynthesis</keyword>
<keyword id="KW-0067">ATP-binding</keyword>
<keyword id="KW-0963">Cytoplasm</keyword>
<keyword id="KW-0436">Ligase</keyword>
<keyword id="KW-0547">Nucleotide-binding</keyword>
<organism>
    <name type="scientific">Burkholderia thailandensis (strain ATCC 700388 / DSM 13276 / CCUG 48851 / CIP 106301 / E264)</name>
    <dbReference type="NCBI Taxonomy" id="271848"/>
    <lineage>
        <taxon>Bacteria</taxon>
        <taxon>Pseudomonadati</taxon>
        <taxon>Pseudomonadota</taxon>
        <taxon>Betaproteobacteria</taxon>
        <taxon>Burkholderiales</taxon>
        <taxon>Burkholderiaceae</taxon>
        <taxon>Burkholderia</taxon>
        <taxon>pseudomallei group</taxon>
    </lineage>
</organism>
<feature type="chain" id="PRO_1000025418" description="Argininosuccinate synthase">
    <location>
        <begin position="1"/>
        <end position="446"/>
    </location>
</feature>
<feature type="binding site" evidence="1">
    <location>
        <begin position="17"/>
        <end position="25"/>
    </location>
    <ligand>
        <name>ATP</name>
        <dbReference type="ChEBI" id="CHEBI:30616"/>
    </ligand>
</feature>
<feature type="binding site" evidence="1">
    <location>
        <position position="43"/>
    </location>
    <ligand>
        <name>ATP</name>
        <dbReference type="ChEBI" id="CHEBI:30616"/>
    </ligand>
</feature>
<feature type="binding site" evidence="1">
    <location>
        <position position="99"/>
    </location>
    <ligand>
        <name>L-citrulline</name>
        <dbReference type="ChEBI" id="CHEBI:57743"/>
    </ligand>
</feature>
<feature type="binding site" evidence="1">
    <location>
        <position position="129"/>
    </location>
    <ligand>
        <name>ATP</name>
        <dbReference type="ChEBI" id="CHEBI:30616"/>
    </ligand>
</feature>
<feature type="binding site" evidence="1">
    <location>
        <position position="131"/>
    </location>
    <ligand>
        <name>ATP</name>
        <dbReference type="ChEBI" id="CHEBI:30616"/>
    </ligand>
</feature>
<feature type="binding site" evidence="1">
    <location>
        <position position="131"/>
    </location>
    <ligand>
        <name>L-aspartate</name>
        <dbReference type="ChEBI" id="CHEBI:29991"/>
    </ligand>
</feature>
<feature type="binding site" evidence="1">
    <location>
        <position position="135"/>
    </location>
    <ligand>
        <name>L-aspartate</name>
        <dbReference type="ChEBI" id="CHEBI:29991"/>
    </ligand>
</feature>
<feature type="binding site" evidence="1">
    <location>
        <position position="135"/>
    </location>
    <ligand>
        <name>L-citrulline</name>
        <dbReference type="ChEBI" id="CHEBI:57743"/>
    </ligand>
</feature>
<feature type="binding site" evidence="1">
    <location>
        <position position="136"/>
    </location>
    <ligand>
        <name>ATP</name>
        <dbReference type="ChEBI" id="CHEBI:30616"/>
    </ligand>
</feature>
<feature type="binding site" evidence="1">
    <location>
        <position position="136"/>
    </location>
    <ligand>
        <name>L-aspartate</name>
        <dbReference type="ChEBI" id="CHEBI:29991"/>
    </ligand>
</feature>
<feature type="binding site" evidence="1">
    <location>
        <position position="139"/>
    </location>
    <ligand>
        <name>L-citrulline</name>
        <dbReference type="ChEBI" id="CHEBI:57743"/>
    </ligand>
</feature>
<feature type="binding site" evidence="1">
    <location>
        <position position="192"/>
    </location>
    <ligand>
        <name>L-citrulline</name>
        <dbReference type="ChEBI" id="CHEBI:57743"/>
    </ligand>
</feature>
<feature type="binding site" evidence="1">
    <location>
        <position position="194"/>
    </location>
    <ligand>
        <name>ATP</name>
        <dbReference type="ChEBI" id="CHEBI:30616"/>
    </ligand>
</feature>
<feature type="binding site" evidence="1">
    <location>
        <position position="201"/>
    </location>
    <ligand>
        <name>L-citrulline</name>
        <dbReference type="ChEBI" id="CHEBI:57743"/>
    </ligand>
</feature>
<feature type="binding site" evidence="1">
    <location>
        <position position="203"/>
    </location>
    <ligand>
        <name>L-citrulline</name>
        <dbReference type="ChEBI" id="CHEBI:57743"/>
    </ligand>
</feature>
<feature type="binding site" evidence="1">
    <location>
        <position position="280"/>
    </location>
    <ligand>
        <name>L-citrulline</name>
        <dbReference type="ChEBI" id="CHEBI:57743"/>
    </ligand>
</feature>
<comment type="catalytic activity">
    <reaction evidence="1">
        <text>L-citrulline + L-aspartate + ATP = 2-(N(omega)-L-arginino)succinate + AMP + diphosphate + H(+)</text>
        <dbReference type="Rhea" id="RHEA:10932"/>
        <dbReference type="ChEBI" id="CHEBI:15378"/>
        <dbReference type="ChEBI" id="CHEBI:29991"/>
        <dbReference type="ChEBI" id="CHEBI:30616"/>
        <dbReference type="ChEBI" id="CHEBI:33019"/>
        <dbReference type="ChEBI" id="CHEBI:57472"/>
        <dbReference type="ChEBI" id="CHEBI:57743"/>
        <dbReference type="ChEBI" id="CHEBI:456215"/>
        <dbReference type="EC" id="6.3.4.5"/>
    </reaction>
</comment>
<comment type="pathway">
    <text evidence="1">Amino-acid biosynthesis; L-arginine biosynthesis; L-arginine from L-ornithine and carbamoyl phosphate: step 2/3.</text>
</comment>
<comment type="subunit">
    <text evidence="1">Homotetramer.</text>
</comment>
<comment type="subcellular location">
    <subcellularLocation>
        <location evidence="1">Cytoplasm</location>
    </subcellularLocation>
</comment>
<comment type="similarity">
    <text evidence="1">Belongs to the argininosuccinate synthase family. Type 2 subfamily.</text>
</comment>
<name>ASSY_BURTA</name>
<proteinExistence type="inferred from homology"/>
<reference key="1">
    <citation type="journal article" date="2005" name="BMC Genomics">
        <title>Bacterial genome adaptation to niches: divergence of the potential virulence genes in three Burkholderia species of different survival strategies.</title>
        <authorList>
            <person name="Kim H.S."/>
            <person name="Schell M.A."/>
            <person name="Yu Y."/>
            <person name="Ulrich R.L."/>
            <person name="Sarria S.H."/>
            <person name="Nierman W.C."/>
            <person name="DeShazer D."/>
        </authorList>
    </citation>
    <scope>NUCLEOTIDE SEQUENCE [LARGE SCALE GENOMIC DNA]</scope>
    <source>
        <strain>ATCC 700388 / DSM 13276 / CCUG 48851 / CIP 106301 / E264</strain>
    </source>
</reference>
<sequence>MTTILENLPAGQKVGIAFSGGLDTSAALHWMRIKGAVPYAYTANLGQPDEDDYDAIPKRAIQYGAEGARLIDCRAQLVAEGIAALQCGAFHISTAGVTYFNTTPIGRAVTGTMLVAAMKEDGVNIWGDGSTYKGNDIERFYRYGLLVNPDLKIYKPWLDQQFIDELGGRAEMSEFMRQAGFEYKMSAEKAYSTDSNLLGATHEAKDLESLESGIKIVNPIMGVAFWRDDVKIDKEAVTVRFEEGRPVALNGVEYKDAVELLLEANRIGGRHGLGMSDQIENRIIEAKSRGIYEAPGLALLYIAYERLVTGIHNEDTIEQYRENGRRLGRLLYQGRWFDPQAIMLRETAQRWVARAVTGEVTVELRRGNDYSILATRSPNLTYQPERLSMEKVQSTFSPRDRIGQLTMRNLDITDTRDKLRIYSEVGLLTPGESSALPKLKEDESGN</sequence>
<gene>
    <name evidence="1" type="primary">argG</name>
    <name type="ordered locus">BTH_I0279</name>
</gene>
<protein>
    <recommendedName>
        <fullName evidence="1">Argininosuccinate synthase</fullName>
        <ecNumber evidence="1">6.3.4.5</ecNumber>
    </recommendedName>
    <alternativeName>
        <fullName evidence="1">Citrulline--aspartate ligase</fullName>
    </alternativeName>
</protein>
<dbReference type="EC" id="6.3.4.5" evidence="1"/>
<dbReference type="EMBL" id="CP000086">
    <property type="protein sequence ID" value="ABC37394.1"/>
    <property type="molecule type" value="Genomic_DNA"/>
</dbReference>
<dbReference type="RefSeq" id="WP_009893376.1">
    <property type="nucleotide sequence ID" value="NZ_CP008785.1"/>
</dbReference>
<dbReference type="SMR" id="Q2T1W2"/>
<dbReference type="GeneID" id="45120045"/>
<dbReference type="KEGG" id="bte:BTH_I0279"/>
<dbReference type="HOGENOM" id="CLU_032784_4_1_4"/>
<dbReference type="UniPathway" id="UPA00068">
    <property type="reaction ID" value="UER00113"/>
</dbReference>
<dbReference type="Proteomes" id="UP000001930">
    <property type="component" value="Chromosome I"/>
</dbReference>
<dbReference type="GO" id="GO:0005737">
    <property type="term" value="C:cytoplasm"/>
    <property type="evidence" value="ECO:0007669"/>
    <property type="project" value="UniProtKB-SubCell"/>
</dbReference>
<dbReference type="GO" id="GO:0004055">
    <property type="term" value="F:argininosuccinate synthase activity"/>
    <property type="evidence" value="ECO:0007669"/>
    <property type="project" value="UniProtKB-UniRule"/>
</dbReference>
<dbReference type="GO" id="GO:0005524">
    <property type="term" value="F:ATP binding"/>
    <property type="evidence" value="ECO:0007669"/>
    <property type="project" value="UniProtKB-UniRule"/>
</dbReference>
<dbReference type="GO" id="GO:0042803">
    <property type="term" value="F:protein homodimerization activity"/>
    <property type="evidence" value="ECO:0007669"/>
    <property type="project" value="InterPro"/>
</dbReference>
<dbReference type="GO" id="GO:0000053">
    <property type="term" value="P:argininosuccinate metabolic process"/>
    <property type="evidence" value="ECO:0007669"/>
    <property type="project" value="TreeGrafter"/>
</dbReference>
<dbReference type="GO" id="GO:0006526">
    <property type="term" value="P:L-arginine biosynthetic process"/>
    <property type="evidence" value="ECO:0007669"/>
    <property type="project" value="UniProtKB-UniRule"/>
</dbReference>
<dbReference type="GO" id="GO:0000050">
    <property type="term" value="P:urea cycle"/>
    <property type="evidence" value="ECO:0007669"/>
    <property type="project" value="TreeGrafter"/>
</dbReference>
<dbReference type="CDD" id="cd01999">
    <property type="entry name" value="ASS"/>
    <property type="match status" value="1"/>
</dbReference>
<dbReference type="FunFam" id="1.10.287.400:FF:000001">
    <property type="entry name" value="Argininosuccinate synthase"/>
    <property type="match status" value="1"/>
</dbReference>
<dbReference type="Gene3D" id="1.10.287.400">
    <property type="match status" value="1"/>
</dbReference>
<dbReference type="Gene3D" id="3.90.1260.10">
    <property type="entry name" value="Argininosuccinate synthetase, chain A, domain 2"/>
    <property type="match status" value="1"/>
</dbReference>
<dbReference type="Gene3D" id="3.40.50.620">
    <property type="entry name" value="HUPs"/>
    <property type="match status" value="1"/>
</dbReference>
<dbReference type="HAMAP" id="MF_00581">
    <property type="entry name" value="Arg_succ_synth_type2"/>
    <property type="match status" value="1"/>
</dbReference>
<dbReference type="InterPro" id="IPR023437">
    <property type="entry name" value="Arg_succ_synth_type2_subfam"/>
</dbReference>
<dbReference type="InterPro" id="IPR048268">
    <property type="entry name" value="Arginosuc_syn_C"/>
</dbReference>
<dbReference type="InterPro" id="IPR048267">
    <property type="entry name" value="Arginosuc_syn_N"/>
</dbReference>
<dbReference type="InterPro" id="IPR001518">
    <property type="entry name" value="Arginosuc_synth"/>
</dbReference>
<dbReference type="InterPro" id="IPR018223">
    <property type="entry name" value="Arginosuc_synth_CS"/>
</dbReference>
<dbReference type="InterPro" id="IPR023434">
    <property type="entry name" value="Arginosuc_synth_type_1_subfam"/>
</dbReference>
<dbReference type="InterPro" id="IPR024074">
    <property type="entry name" value="AS_cat/multimer_dom_body"/>
</dbReference>
<dbReference type="InterPro" id="IPR024073">
    <property type="entry name" value="AS_multimer_C_tail"/>
</dbReference>
<dbReference type="InterPro" id="IPR014729">
    <property type="entry name" value="Rossmann-like_a/b/a_fold"/>
</dbReference>
<dbReference type="NCBIfam" id="TIGR00032">
    <property type="entry name" value="argG"/>
    <property type="match status" value="1"/>
</dbReference>
<dbReference type="NCBIfam" id="NF003779">
    <property type="entry name" value="PRK05370.1"/>
    <property type="match status" value="1"/>
</dbReference>
<dbReference type="PANTHER" id="PTHR11587">
    <property type="entry name" value="ARGININOSUCCINATE SYNTHASE"/>
    <property type="match status" value="1"/>
</dbReference>
<dbReference type="PANTHER" id="PTHR11587:SF2">
    <property type="entry name" value="ARGININOSUCCINATE SYNTHASE"/>
    <property type="match status" value="1"/>
</dbReference>
<dbReference type="Pfam" id="PF20979">
    <property type="entry name" value="Arginosuc_syn_C"/>
    <property type="match status" value="1"/>
</dbReference>
<dbReference type="Pfam" id="PF00764">
    <property type="entry name" value="Arginosuc_synth"/>
    <property type="match status" value="1"/>
</dbReference>
<dbReference type="SUPFAM" id="SSF52402">
    <property type="entry name" value="Adenine nucleotide alpha hydrolases-like"/>
    <property type="match status" value="1"/>
</dbReference>
<dbReference type="SUPFAM" id="SSF69864">
    <property type="entry name" value="Argininosuccinate synthetase, C-terminal domain"/>
    <property type="match status" value="1"/>
</dbReference>
<dbReference type="PROSITE" id="PS00564">
    <property type="entry name" value="ARGININOSUCCIN_SYN_1"/>
    <property type="match status" value="1"/>
</dbReference>
<dbReference type="PROSITE" id="PS00565">
    <property type="entry name" value="ARGININOSUCCIN_SYN_2"/>
    <property type="match status" value="1"/>
</dbReference>
<evidence type="ECO:0000255" key="1">
    <source>
        <dbReference type="HAMAP-Rule" id="MF_00581"/>
    </source>
</evidence>
<accession>Q2T1W2</accession>